<comment type="subunit">
    <text evidence="4">Homodimer; disulfide-linked.</text>
</comment>
<comment type="subcellular location">
    <subcellularLocation>
        <location evidence="1">Secreted</location>
    </subcellularLocation>
</comment>
<comment type="similarity">
    <text evidence="4">Belongs to the TGF-beta family.</text>
</comment>
<reference key="1">
    <citation type="submission" date="1995-02" db="EMBL/GenBank/DDBJ databases">
        <authorList>
            <person name="Ponce M.R."/>
            <person name="Micol J.L."/>
            <person name="Davidson E.H."/>
        </authorList>
    </citation>
    <scope>NUCLEOTIDE SEQUENCE [MRNA]</scope>
</reference>
<proteinExistence type="evidence at transcript level"/>
<accession>P48969</accession>
<dbReference type="EMBL" id="Z48313">
    <property type="protein sequence ID" value="CAA88306.1"/>
    <property type="molecule type" value="mRNA"/>
</dbReference>
<dbReference type="PIR" id="S52408">
    <property type="entry name" value="S52408"/>
</dbReference>
<dbReference type="RefSeq" id="NP_999820.1">
    <property type="nucleotide sequence ID" value="NM_214655.1"/>
</dbReference>
<dbReference type="SMR" id="P48969"/>
<dbReference type="FunCoup" id="P48969">
    <property type="interactions" value="1254"/>
</dbReference>
<dbReference type="STRING" id="7668.P48969"/>
<dbReference type="GlyCosmos" id="P48969">
    <property type="glycosylation" value="2 sites, No reported glycans"/>
</dbReference>
<dbReference type="EnsemblMetazoa" id="NM_214655">
    <property type="protein sequence ID" value="NP_999820"/>
    <property type="gene ID" value="GeneID_373534"/>
</dbReference>
<dbReference type="GeneID" id="373534"/>
<dbReference type="KEGG" id="spu:373534"/>
<dbReference type="CTD" id="373534"/>
<dbReference type="eggNOG" id="KOG3900">
    <property type="taxonomic scope" value="Eukaryota"/>
</dbReference>
<dbReference type="InParanoid" id="P48969"/>
<dbReference type="OMA" id="ERQQPWP"/>
<dbReference type="OrthoDB" id="5987191at2759"/>
<dbReference type="PhylomeDB" id="P48969"/>
<dbReference type="Proteomes" id="UP000007110">
    <property type="component" value="Unassembled WGS sequence"/>
</dbReference>
<dbReference type="GO" id="GO:0005615">
    <property type="term" value="C:extracellular space"/>
    <property type="evidence" value="ECO:0000318"/>
    <property type="project" value="GO_Central"/>
</dbReference>
<dbReference type="GO" id="GO:0005125">
    <property type="term" value="F:cytokine activity"/>
    <property type="evidence" value="ECO:0000318"/>
    <property type="project" value="GO_Central"/>
</dbReference>
<dbReference type="GO" id="GO:0008083">
    <property type="term" value="F:growth factor activity"/>
    <property type="evidence" value="ECO:0007669"/>
    <property type="project" value="UniProtKB-KW"/>
</dbReference>
<dbReference type="CDD" id="cd13761">
    <property type="entry name" value="TGF_beta_BMP5_like"/>
    <property type="match status" value="1"/>
</dbReference>
<dbReference type="FunFam" id="2.10.90.10:FF:000003">
    <property type="entry name" value="Bone morphogenetic protein 5"/>
    <property type="match status" value="1"/>
</dbReference>
<dbReference type="FunFam" id="2.60.120.970:FF:000049">
    <property type="entry name" value="Protein DVR-1 homolog"/>
    <property type="match status" value="1"/>
</dbReference>
<dbReference type="Gene3D" id="2.60.120.970">
    <property type="match status" value="1"/>
</dbReference>
<dbReference type="Gene3D" id="2.10.90.10">
    <property type="entry name" value="Cystine-knot cytokines"/>
    <property type="match status" value="1"/>
</dbReference>
<dbReference type="InterPro" id="IPR029034">
    <property type="entry name" value="Cystine-knot_cytokine"/>
</dbReference>
<dbReference type="InterPro" id="IPR001839">
    <property type="entry name" value="TGF-b_C"/>
</dbReference>
<dbReference type="InterPro" id="IPR001111">
    <property type="entry name" value="TGF-b_propeptide"/>
</dbReference>
<dbReference type="InterPro" id="IPR015615">
    <property type="entry name" value="TGF-beta-rel"/>
</dbReference>
<dbReference type="InterPro" id="IPR017948">
    <property type="entry name" value="TGFb_CS"/>
</dbReference>
<dbReference type="PANTHER" id="PTHR11848:SF310">
    <property type="entry name" value="PROTEIN 60A-RELATED"/>
    <property type="match status" value="1"/>
</dbReference>
<dbReference type="PANTHER" id="PTHR11848">
    <property type="entry name" value="TGF-BETA FAMILY"/>
    <property type="match status" value="1"/>
</dbReference>
<dbReference type="Pfam" id="PF00019">
    <property type="entry name" value="TGF_beta"/>
    <property type="match status" value="1"/>
</dbReference>
<dbReference type="Pfam" id="PF00688">
    <property type="entry name" value="TGFb_propeptide"/>
    <property type="match status" value="1"/>
</dbReference>
<dbReference type="PRINTS" id="PR00669">
    <property type="entry name" value="INHIBINA"/>
</dbReference>
<dbReference type="SMART" id="SM00204">
    <property type="entry name" value="TGFB"/>
    <property type="match status" value="1"/>
</dbReference>
<dbReference type="SUPFAM" id="SSF57501">
    <property type="entry name" value="Cystine-knot cytokines"/>
    <property type="match status" value="1"/>
</dbReference>
<dbReference type="PROSITE" id="PS00250">
    <property type="entry name" value="TGF_BETA_1"/>
    <property type="match status" value="1"/>
</dbReference>
<dbReference type="PROSITE" id="PS51362">
    <property type="entry name" value="TGF_BETA_2"/>
    <property type="match status" value="1"/>
</dbReference>
<protein>
    <recommendedName>
        <fullName>Protein DVR-1 homolog</fullName>
    </recommendedName>
</protein>
<keyword id="KW-0165">Cleavage on pair of basic residues</keyword>
<keyword id="KW-0202">Cytokine</keyword>
<keyword id="KW-1015">Disulfide bond</keyword>
<keyword id="KW-0325">Glycoprotein</keyword>
<keyword id="KW-0339">Growth factor</keyword>
<keyword id="KW-1185">Reference proteome</keyword>
<keyword id="KW-0964">Secreted</keyword>
<keyword id="KW-0732">Signal</keyword>
<organism>
    <name type="scientific">Strongylocentrotus purpuratus</name>
    <name type="common">Purple sea urchin</name>
    <dbReference type="NCBI Taxonomy" id="7668"/>
    <lineage>
        <taxon>Eukaryota</taxon>
        <taxon>Metazoa</taxon>
        <taxon>Echinodermata</taxon>
        <taxon>Eleutherozoa</taxon>
        <taxon>Echinozoa</taxon>
        <taxon>Echinoidea</taxon>
        <taxon>Euechinoidea</taxon>
        <taxon>Echinacea</taxon>
        <taxon>Camarodonta</taxon>
        <taxon>Echinidea</taxon>
        <taxon>Strongylocentrotidae</taxon>
        <taxon>Strongylocentrotus</taxon>
    </lineage>
</organism>
<evidence type="ECO:0000250" key="1"/>
<evidence type="ECO:0000255" key="2"/>
<evidence type="ECO:0000256" key="3">
    <source>
        <dbReference type="SAM" id="MobiDB-lite"/>
    </source>
</evidence>
<evidence type="ECO:0000305" key="4"/>
<gene>
    <name type="primary">DVR1</name>
</gene>
<sequence length="461" mass="51881">MEYSRKTYLDLNIMAKYILILSLFFGPGLSWDVFYSGDEDQLSLARERRAANYNPSPHMSTWERNEIQQEILNILGLQHRPRPPSLRGGQNQFCAQFTEWSYYRTLNIDEQSGHPSETEPQPGGLASNAIYNSPDSSGIGSVMSGTVFNYTRNEVQAVSQADTIMSLPVHYKDAAIEDTEHRYRFDIGRIPQGETVTSAELRVFRDAGRQGRSLYRIDVLLLRERGSDGSRSPVYLDSTIVGAGDHGWLVFDMTSATSTWRSYPGANVGLQLRVESLQGLNIDPTDAGVVGVGNNEGREPFMVVFFQRNEEVIATNSHLRRNRRAATRQKKGGKRPRKPDTDNDIASRDSASSLNSDWQCKRKNLFVNFEDLDWQEWIIAPLGYVAFYCQGECAFPLNGHANATNHAIVQTLVHHMSPSHVPQPCCAPTKLSPITVLYYDDSRNVVLKKYKNMVVRACGCL</sequence>
<name>DVR1_STRPU</name>
<feature type="signal peptide" evidence="2">
    <location>
        <begin position="1"/>
        <end position="30"/>
    </location>
</feature>
<feature type="propeptide" id="PRO_0000033818" evidence="2">
    <location>
        <begin position="31"/>
        <end position="338"/>
    </location>
</feature>
<feature type="chain" id="PRO_0000033819" description="Protein DVR-1 homolog">
    <location>
        <begin position="339"/>
        <end position="461"/>
    </location>
</feature>
<feature type="region of interest" description="Disordered" evidence="3">
    <location>
        <begin position="317"/>
        <end position="351"/>
    </location>
</feature>
<feature type="compositionally biased region" description="Basic residues" evidence="3">
    <location>
        <begin position="318"/>
        <end position="337"/>
    </location>
</feature>
<feature type="compositionally biased region" description="Basic and acidic residues" evidence="3">
    <location>
        <begin position="338"/>
        <end position="347"/>
    </location>
</feature>
<feature type="glycosylation site" description="N-linked (GlcNAc...) asparagine" evidence="2">
    <location>
        <position position="149"/>
    </location>
</feature>
<feature type="glycosylation site" description="N-linked (GlcNAc...) asparagine" evidence="2">
    <location>
        <position position="402"/>
    </location>
</feature>
<feature type="disulfide bond" evidence="1">
    <location>
        <begin position="360"/>
        <end position="426"/>
    </location>
</feature>
<feature type="disulfide bond" evidence="1">
    <location>
        <begin position="389"/>
        <end position="458"/>
    </location>
</feature>
<feature type="disulfide bond" evidence="1">
    <location>
        <begin position="393"/>
        <end position="460"/>
    </location>
</feature>
<feature type="disulfide bond" description="Interchain" evidence="1">
    <location>
        <position position="425"/>
    </location>
</feature>